<sequence length="149" mass="16790">MSKTLSFKTYSAKPGDVERKWYVVDAEGQILGRMAAEIAKVLRGKHKPEFTPHIDTGDFIVVTNAEKVALSGKKLDAKAYFSHSQYPGGVKFNHVKDLLRKKPEKVIEHAVWGMLPHNNLGRQLFKKLKVYPGATHPHESQSPIEMKVN</sequence>
<proteinExistence type="inferred from homology"/>
<feature type="chain" id="PRO_1000087098" description="Large ribosomal subunit protein uL13">
    <location>
        <begin position="1"/>
        <end position="149"/>
    </location>
</feature>
<evidence type="ECO:0000255" key="1">
    <source>
        <dbReference type="HAMAP-Rule" id="MF_01366"/>
    </source>
</evidence>
<evidence type="ECO:0000305" key="2"/>
<keyword id="KW-0687">Ribonucleoprotein</keyword>
<keyword id="KW-0689">Ribosomal protein</keyword>
<accession>A4SDB9</accession>
<comment type="function">
    <text evidence="1">This protein is one of the early assembly proteins of the 50S ribosomal subunit, although it is not seen to bind rRNA by itself. It is important during the early stages of 50S assembly.</text>
</comment>
<comment type="subunit">
    <text evidence="1">Part of the 50S ribosomal subunit.</text>
</comment>
<comment type="similarity">
    <text evidence="1">Belongs to the universal ribosomal protein uL13 family.</text>
</comment>
<organism>
    <name type="scientific">Chlorobium phaeovibrioides (strain DSM 265 / 1930)</name>
    <name type="common">Prosthecochloris vibrioformis (strain DSM 265)</name>
    <dbReference type="NCBI Taxonomy" id="290318"/>
    <lineage>
        <taxon>Bacteria</taxon>
        <taxon>Pseudomonadati</taxon>
        <taxon>Chlorobiota</taxon>
        <taxon>Chlorobiia</taxon>
        <taxon>Chlorobiales</taxon>
        <taxon>Chlorobiaceae</taxon>
        <taxon>Chlorobium/Pelodictyon group</taxon>
        <taxon>Chlorobium</taxon>
    </lineage>
</organism>
<gene>
    <name evidence="1" type="primary">rplM</name>
    <name type="ordered locus">Cvib_0456</name>
</gene>
<dbReference type="EMBL" id="CP000607">
    <property type="protein sequence ID" value="ABP36478.1"/>
    <property type="molecule type" value="Genomic_DNA"/>
</dbReference>
<dbReference type="SMR" id="A4SDB9"/>
<dbReference type="STRING" id="290318.Cvib_0456"/>
<dbReference type="KEGG" id="pvi:Cvib_0456"/>
<dbReference type="eggNOG" id="COG0102">
    <property type="taxonomic scope" value="Bacteria"/>
</dbReference>
<dbReference type="HOGENOM" id="CLU_082184_2_2_10"/>
<dbReference type="OrthoDB" id="9801330at2"/>
<dbReference type="GO" id="GO:0022625">
    <property type="term" value="C:cytosolic large ribosomal subunit"/>
    <property type="evidence" value="ECO:0007669"/>
    <property type="project" value="TreeGrafter"/>
</dbReference>
<dbReference type="GO" id="GO:0003729">
    <property type="term" value="F:mRNA binding"/>
    <property type="evidence" value="ECO:0007669"/>
    <property type="project" value="TreeGrafter"/>
</dbReference>
<dbReference type="GO" id="GO:0003735">
    <property type="term" value="F:structural constituent of ribosome"/>
    <property type="evidence" value="ECO:0007669"/>
    <property type="project" value="InterPro"/>
</dbReference>
<dbReference type="GO" id="GO:0017148">
    <property type="term" value="P:negative regulation of translation"/>
    <property type="evidence" value="ECO:0007669"/>
    <property type="project" value="TreeGrafter"/>
</dbReference>
<dbReference type="GO" id="GO:0006412">
    <property type="term" value="P:translation"/>
    <property type="evidence" value="ECO:0007669"/>
    <property type="project" value="UniProtKB-UniRule"/>
</dbReference>
<dbReference type="CDD" id="cd00392">
    <property type="entry name" value="Ribosomal_L13"/>
    <property type="match status" value="1"/>
</dbReference>
<dbReference type="FunFam" id="3.90.1180.10:FF:000001">
    <property type="entry name" value="50S ribosomal protein L13"/>
    <property type="match status" value="1"/>
</dbReference>
<dbReference type="Gene3D" id="3.90.1180.10">
    <property type="entry name" value="Ribosomal protein L13"/>
    <property type="match status" value="1"/>
</dbReference>
<dbReference type="HAMAP" id="MF_01366">
    <property type="entry name" value="Ribosomal_uL13"/>
    <property type="match status" value="1"/>
</dbReference>
<dbReference type="InterPro" id="IPR005822">
    <property type="entry name" value="Ribosomal_uL13"/>
</dbReference>
<dbReference type="InterPro" id="IPR005823">
    <property type="entry name" value="Ribosomal_uL13_bac-type"/>
</dbReference>
<dbReference type="InterPro" id="IPR036899">
    <property type="entry name" value="Ribosomal_uL13_sf"/>
</dbReference>
<dbReference type="NCBIfam" id="TIGR01066">
    <property type="entry name" value="rplM_bact"/>
    <property type="match status" value="1"/>
</dbReference>
<dbReference type="PANTHER" id="PTHR11545:SF2">
    <property type="entry name" value="LARGE RIBOSOMAL SUBUNIT PROTEIN UL13M"/>
    <property type="match status" value="1"/>
</dbReference>
<dbReference type="PANTHER" id="PTHR11545">
    <property type="entry name" value="RIBOSOMAL PROTEIN L13"/>
    <property type="match status" value="1"/>
</dbReference>
<dbReference type="Pfam" id="PF00572">
    <property type="entry name" value="Ribosomal_L13"/>
    <property type="match status" value="1"/>
</dbReference>
<dbReference type="PIRSF" id="PIRSF002181">
    <property type="entry name" value="Ribosomal_L13"/>
    <property type="match status" value="1"/>
</dbReference>
<dbReference type="SUPFAM" id="SSF52161">
    <property type="entry name" value="Ribosomal protein L13"/>
    <property type="match status" value="1"/>
</dbReference>
<protein>
    <recommendedName>
        <fullName evidence="1">Large ribosomal subunit protein uL13</fullName>
    </recommendedName>
    <alternativeName>
        <fullName evidence="2">50S ribosomal protein L13</fullName>
    </alternativeName>
</protein>
<reference key="1">
    <citation type="submission" date="2007-03" db="EMBL/GenBank/DDBJ databases">
        <title>Complete sequence of Prosthecochloris vibrioformis DSM 265.</title>
        <authorList>
            <consortium name="US DOE Joint Genome Institute"/>
            <person name="Copeland A."/>
            <person name="Lucas S."/>
            <person name="Lapidus A."/>
            <person name="Barry K."/>
            <person name="Detter J.C."/>
            <person name="Glavina del Rio T."/>
            <person name="Hammon N."/>
            <person name="Israni S."/>
            <person name="Pitluck S."/>
            <person name="Schmutz J."/>
            <person name="Larimer F."/>
            <person name="Land M."/>
            <person name="Hauser L."/>
            <person name="Mikhailova N."/>
            <person name="Li T."/>
            <person name="Overmann J."/>
            <person name="Schuster S.C."/>
            <person name="Bryant D.A."/>
            <person name="Richardson P."/>
        </authorList>
    </citation>
    <scope>NUCLEOTIDE SEQUENCE [LARGE SCALE GENOMIC DNA]</scope>
    <source>
        <strain>DSM 265 / 1930</strain>
    </source>
</reference>
<name>RL13_CHLPM</name>